<evidence type="ECO:0000250" key="1">
    <source>
        <dbReference type="UniProtKB" id="P15289"/>
    </source>
</evidence>
<evidence type="ECO:0000250" key="2">
    <source>
        <dbReference type="UniProtKB" id="Q8IWU5"/>
    </source>
</evidence>
<evidence type="ECO:0000250" key="3">
    <source>
        <dbReference type="UniProtKB" id="Q8VI60"/>
    </source>
</evidence>
<evidence type="ECO:0000255" key="4"/>
<evidence type="ECO:0000256" key="5">
    <source>
        <dbReference type="SAM" id="MobiDB-lite"/>
    </source>
</evidence>
<evidence type="ECO:0000269" key="6">
    <source>
    </source>
</evidence>
<evidence type="ECO:0000269" key="7">
    <source>
    </source>
</evidence>
<evidence type="ECO:0000269" key="8">
    <source>
    </source>
</evidence>
<evidence type="ECO:0000303" key="9">
    <source>
    </source>
</evidence>
<evidence type="ECO:0000305" key="10"/>
<comment type="function">
    <text evidence="6 7">Exhibits arylsulfatase activity and highly specific endoglucosamine-6-sulfatase activity (PubMed:12368295, PubMed:12686563). It can remove sulfate from the C-6 position of glucosamine within specific subregions of intact heparin (PubMed:12368295, PubMed:12686563). Diminishes HSPG (heparan sulfate proteoglycans) sulfation, inhibits signaling by heparin-dependent growth factors, diminishes proliferation, and facilitates apoptosis in response to exogenous stimulation (PubMed:12686563).</text>
</comment>
<comment type="catalytic activity">
    <reaction evidence="6">
        <text>an aryl sulfate + H2O = a phenol + sulfate + H(+)</text>
        <dbReference type="Rhea" id="RHEA:17261"/>
        <dbReference type="ChEBI" id="CHEBI:15377"/>
        <dbReference type="ChEBI" id="CHEBI:15378"/>
        <dbReference type="ChEBI" id="CHEBI:16189"/>
        <dbReference type="ChEBI" id="CHEBI:33853"/>
        <dbReference type="ChEBI" id="CHEBI:140317"/>
        <dbReference type="EC" id="3.1.6.1"/>
    </reaction>
</comment>
<comment type="catalytic activity">
    <reaction evidence="6 7">
        <text>Hydrolysis of the 6-sulfate groups of the N-acetyl-D-glucosamine 6-sulfate units of heparan sulfate and keratan sulfate.</text>
        <dbReference type="EC" id="3.1.6.14"/>
    </reaction>
</comment>
<comment type="cofactor">
    <cofactor evidence="1">
        <name>Ca(2+)</name>
        <dbReference type="ChEBI" id="CHEBI:29108"/>
    </cofactor>
    <text evidence="1">Binds 1 Ca(2+) ion per subunit.</text>
</comment>
<comment type="biophysicochemical properties">
    <phDependence>
        <text evidence="6">Optimum pH is 7.0-8.0.</text>
    </phDependence>
</comment>
<comment type="subcellular location">
    <subcellularLocation>
        <location evidence="3">Endoplasmic reticulum</location>
    </subcellularLocation>
    <subcellularLocation>
        <location evidence="3">Golgi apparatus</location>
        <location evidence="3">Golgi stack</location>
    </subcellularLocation>
    <subcellularLocation>
        <location evidence="6 7">Cell surface</location>
    </subcellularLocation>
</comment>
<comment type="subcellular location">
    <molecule>Extracellular sulfatase Sulf-2 secreted form</molecule>
    <subcellularLocation>
        <location evidence="6">Secreted</location>
    </subcellularLocation>
</comment>
<comment type="tissue specificity">
    <text evidence="6 7">Expressed at highest levels in testis, stomach, skeletal muscle, lung, kidney, pancreas, small intestine and colon. It is also detected in normal ovarian surface epithelial cells. Down-regulation seen in ovarian carcinoma cell lines, ovarian cancers, breast, pancreatic, renal and hepatocellular carcinoma cell lines.</text>
</comment>
<comment type="PTM">
    <text evidence="6">Processing by furin produces a secreted form.</text>
</comment>
<comment type="PTM">
    <text evidence="1">The conversion to 3-oxoalanine (also known as C-formylglycine, FGly), of a serine or cysteine residue in prokaryotes and of a cysteine residue in eukaryotes, is critical for catalytic activity.</text>
</comment>
<comment type="similarity">
    <text evidence="10">Belongs to the sulfatase family.</text>
</comment>
<comment type="online information" name="Atlas of Genetics and Cytogenetics in Oncology and Haematology">
    <link uri="https://atlasgeneticsoncology.org/gene/44378/SULF1"/>
</comment>
<proteinExistence type="evidence at protein level"/>
<gene>
    <name type="primary">SULF1</name>
    <name type="synonym">KIAA1077</name>
</gene>
<feature type="signal peptide" evidence="4">
    <location>
        <begin position="1"/>
        <end position="22"/>
    </location>
</feature>
<feature type="chain" id="PRO_0000033434" description="Extracellular sulfatase Sulf-1">
    <location>
        <begin position="23"/>
        <end position="871"/>
    </location>
</feature>
<feature type="chain" id="PRO_0000457756" description="Extracellular sulfatase Sulf-2 secreted form" evidence="2">
    <location>
        <begin position="545"/>
        <end position="870"/>
    </location>
</feature>
<feature type="region of interest" description="Catalytic domain; necessary for arylsulfatase activity" evidence="2">
    <location>
        <begin position="1"/>
        <end position="414"/>
    </location>
</feature>
<feature type="region of interest" description="Hydrophilic domain; necessary for endoglucosamine-6-sulfatase activity" evidence="2">
    <location>
        <begin position="415"/>
        <end position="734"/>
    </location>
</feature>
<feature type="region of interest" description="Disordered" evidence="5">
    <location>
        <begin position="508"/>
        <end position="533"/>
    </location>
</feature>
<feature type="region of interest" description="Disordered" evidence="5">
    <location>
        <begin position="574"/>
        <end position="607"/>
    </location>
</feature>
<feature type="compositionally biased region" description="Basic and acidic residues" evidence="5">
    <location>
        <begin position="575"/>
        <end position="585"/>
    </location>
</feature>
<feature type="active site" description="Nucleophile" evidence="1">
    <location>
        <position position="87"/>
    </location>
</feature>
<feature type="binding site" evidence="1">
    <location>
        <position position="51"/>
    </location>
    <ligand>
        <name>Ca(2+)</name>
        <dbReference type="ChEBI" id="CHEBI:29108"/>
    </ligand>
</feature>
<feature type="binding site" evidence="1">
    <location>
        <position position="52"/>
    </location>
    <ligand>
        <name>Ca(2+)</name>
        <dbReference type="ChEBI" id="CHEBI:29108"/>
    </ligand>
</feature>
<feature type="binding site" description="via 3-oxoalanine" evidence="1">
    <location>
        <position position="87"/>
    </location>
    <ligand>
        <name>Ca(2+)</name>
        <dbReference type="ChEBI" id="CHEBI:29108"/>
    </ligand>
</feature>
<feature type="binding site" evidence="1">
    <location>
        <position position="316"/>
    </location>
    <ligand>
        <name>Ca(2+)</name>
        <dbReference type="ChEBI" id="CHEBI:29108"/>
    </ligand>
</feature>
<feature type="binding site" evidence="1">
    <location>
        <position position="317"/>
    </location>
    <ligand>
        <name>Ca(2+)</name>
        <dbReference type="ChEBI" id="CHEBI:29108"/>
    </ligand>
</feature>
<feature type="site" description="Cleavage; by furin" evidence="2">
    <location>
        <begin position="544"/>
        <end position="545"/>
    </location>
</feature>
<feature type="modified residue" description="3-oxoalanine (Cys)" evidence="1">
    <location>
        <position position="87"/>
    </location>
</feature>
<feature type="glycosylation site" description="N-linked (GlcNAc...) asparagine" evidence="4">
    <location>
        <position position="64"/>
    </location>
</feature>
<feature type="glycosylation site" description="N-linked (GlcNAc...) asparagine" evidence="4">
    <location>
        <position position="111"/>
    </location>
</feature>
<feature type="glycosylation site" description="N-linked (GlcNAc...) asparagine" evidence="4">
    <location>
        <position position="131"/>
    </location>
</feature>
<feature type="glycosylation site" description="N-linked (GlcNAc...) asparagine" evidence="4">
    <location>
        <position position="148"/>
    </location>
</feature>
<feature type="glycosylation site" description="N-linked (GlcNAc...) asparagine" evidence="4">
    <location>
        <position position="170"/>
    </location>
</feature>
<feature type="glycosylation site" description="N-linked (GlcNAc...) asparagine" evidence="8">
    <location>
        <position position="197"/>
    </location>
</feature>
<feature type="glycosylation site" description="N-linked (GlcNAc...) asparagine" evidence="4">
    <location>
        <position position="240"/>
    </location>
</feature>
<feature type="glycosylation site" description="N-linked (GlcNAc...) asparagine" evidence="4">
    <location>
        <position position="623"/>
    </location>
</feature>
<feature type="glycosylation site" description="N-linked (GlcNAc...) asparagine" evidence="4">
    <location>
        <position position="773"/>
    </location>
</feature>
<feature type="glycosylation site" description="N-linked (GlcNAc...) asparagine" evidence="4">
    <location>
        <position position="783"/>
    </location>
</feature>
<feature type="mutagenesis site" description="Loss of arylsulfatase activity and loss of ability to modulate apoptosis." evidence="6 7">
    <original>CC</original>
    <variation>AA</variation>
    <location>
        <begin position="87"/>
        <end position="88"/>
    </location>
</feature>
<feature type="sequence conflict" description="In Ref. 2; AAO33315." evidence="10" ref="2">
    <original>L</original>
    <variation>P</variation>
    <location>
        <position position="49"/>
    </location>
</feature>
<feature type="sequence conflict" description="In Ref. 4; BAC11258." evidence="10" ref="4">
    <original>K</original>
    <variation>R</variation>
    <location>
        <position position="728"/>
    </location>
</feature>
<protein>
    <recommendedName>
        <fullName>Extracellular sulfatase Sulf-1</fullName>
        <shortName>hSulf-1</shortName>
    </recommendedName>
    <alternativeName>
        <fullName>Arylsulfatase</fullName>
        <ecNumber evidence="6">3.1.6.1</ecNumber>
    </alternativeName>
    <alternativeName>
        <fullName>N-acetylglucosamine-6-sulfatase</fullName>
        <ecNumber evidence="6 7">3.1.6.14</ecNumber>
    </alternativeName>
    <component>
        <recommendedName>
            <fullName evidence="9">Extracellular sulfatase Sulf-2 secreted form</fullName>
        </recommendedName>
    </component>
</protein>
<accession>Q8IWU6</accession>
<accession>Q86YV8</accession>
<accession>Q8NCA2</accession>
<accession>Q9UPS5</accession>
<name>SULF1_HUMAN</name>
<reference key="1">
    <citation type="journal article" date="2002" name="J. Biol. Chem.">
        <title>Cloning and characterization of two extracellular heparin-degrading endosulfatases in mice and humans.</title>
        <authorList>
            <person name="Morimoto-Tomita M."/>
            <person name="Uchimura K."/>
            <person name="Werb Z."/>
            <person name="Hemmerich S."/>
            <person name="Rosen S.D."/>
        </authorList>
    </citation>
    <scope>NUCLEOTIDE SEQUENCE [MRNA]</scope>
    <scope>MUTAGENESIS OF 87-CYS-CYS-88</scope>
    <scope>FUNCTION</scope>
    <scope>CATALYTIC ACTIVITY</scope>
    <scope>BIOPHYSICOCHEMICAL PROPERTIES</scope>
    <scope>PROTEOLYTIC CLEAVAGE</scope>
    <scope>SUBCELLULAR LOCATION</scope>
    <scope>TISSUE SPECIFICITY</scope>
    <source>
        <tissue>Prostate</tissue>
    </source>
</reference>
<reference key="2">
    <citation type="journal article" date="2003" name="J. Biol. Chem.">
        <title>Loss of HSulf-1 up-regulates heparin-binding growth factor signaling in cancer.</title>
        <authorList>
            <person name="Lai J."/>
            <person name="Chien J."/>
            <person name="Staub J."/>
            <person name="Avula R."/>
            <person name="Greene E.L."/>
            <person name="Matthews T.A."/>
            <person name="Smith D.I."/>
            <person name="Kaufmann S.H."/>
            <person name="Roberts L.R."/>
            <person name="Shridhar V."/>
        </authorList>
    </citation>
    <scope>NUCLEOTIDE SEQUENCE [MRNA]</scope>
    <scope>MUTAGENESIS OF 87-CYS-CYS-88</scope>
    <scope>TISSUE SPECIFICITY</scope>
    <scope>SUBCELLULAR LOCATION</scope>
    <scope>FUNCTION</scope>
    <scope>CATALYTIC ACTIVITY</scope>
</reference>
<reference key="3">
    <citation type="journal article" date="1999" name="DNA Res.">
        <title>Prediction of the coding sequences of unidentified human genes. XIV. The complete sequences of 100 new cDNA clones from brain which code for large proteins in vitro.</title>
        <authorList>
            <person name="Kikuno R."/>
            <person name="Nagase T."/>
            <person name="Ishikawa K."/>
            <person name="Hirosawa M."/>
            <person name="Miyajima N."/>
            <person name="Tanaka A."/>
            <person name="Kotani H."/>
            <person name="Nomura N."/>
            <person name="Ohara O."/>
        </authorList>
    </citation>
    <scope>NUCLEOTIDE SEQUENCE [LARGE SCALE MRNA] OF 54-871</scope>
    <source>
        <tissue>Brain</tissue>
    </source>
</reference>
<reference key="4">
    <citation type="journal article" date="2004" name="Nat. Genet.">
        <title>Complete sequencing and characterization of 21,243 full-length human cDNAs.</title>
        <authorList>
            <person name="Ota T."/>
            <person name="Suzuki Y."/>
            <person name="Nishikawa T."/>
            <person name="Otsuki T."/>
            <person name="Sugiyama T."/>
            <person name="Irie R."/>
            <person name="Wakamatsu A."/>
            <person name="Hayashi K."/>
            <person name="Sato H."/>
            <person name="Nagai K."/>
            <person name="Kimura K."/>
            <person name="Makita H."/>
            <person name="Sekine M."/>
            <person name="Obayashi M."/>
            <person name="Nishi T."/>
            <person name="Shibahara T."/>
            <person name="Tanaka T."/>
            <person name="Ishii S."/>
            <person name="Yamamoto J."/>
            <person name="Saito K."/>
            <person name="Kawai Y."/>
            <person name="Isono Y."/>
            <person name="Nakamura Y."/>
            <person name="Nagahari K."/>
            <person name="Murakami K."/>
            <person name="Yasuda T."/>
            <person name="Iwayanagi T."/>
            <person name="Wagatsuma M."/>
            <person name="Shiratori A."/>
            <person name="Sudo H."/>
            <person name="Hosoiri T."/>
            <person name="Kaku Y."/>
            <person name="Kodaira H."/>
            <person name="Kondo H."/>
            <person name="Sugawara M."/>
            <person name="Takahashi M."/>
            <person name="Kanda K."/>
            <person name="Yokoi T."/>
            <person name="Furuya T."/>
            <person name="Kikkawa E."/>
            <person name="Omura Y."/>
            <person name="Abe K."/>
            <person name="Kamihara K."/>
            <person name="Katsuta N."/>
            <person name="Sato K."/>
            <person name="Tanikawa M."/>
            <person name="Yamazaki M."/>
            <person name="Ninomiya K."/>
            <person name="Ishibashi T."/>
            <person name="Yamashita H."/>
            <person name="Murakawa K."/>
            <person name="Fujimori K."/>
            <person name="Tanai H."/>
            <person name="Kimata M."/>
            <person name="Watanabe M."/>
            <person name="Hiraoka S."/>
            <person name="Chiba Y."/>
            <person name="Ishida S."/>
            <person name="Ono Y."/>
            <person name="Takiguchi S."/>
            <person name="Watanabe S."/>
            <person name="Yosida M."/>
            <person name="Hotuta T."/>
            <person name="Kusano J."/>
            <person name="Kanehori K."/>
            <person name="Takahashi-Fujii A."/>
            <person name="Hara H."/>
            <person name="Tanase T.-O."/>
            <person name="Nomura Y."/>
            <person name="Togiya S."/>
            <person name="Komai F."/>
            <person name="Hara R."/>
            <person name="Takeuchi K."/>
            <person name="Arita M."/>
            <person name="Imose N."/>
            <person name="Musashino K."/>
            <person name="Yuuki H."/>
            <person name="Oshima A."/>
            <person name="Sasaki N."/>
            <person name="Aotsuka S."/>
            <person name="Yoshikawa Y."/>
            <person name="Matsunawa H."/>
            <person name="Ichihara T."/>
            <person name="Shiohata N."/>
            <person name="Sano S."/>
            <person name="Moriya S."/>
            <person name="Momiyama H."/>
            <person name="Satoh N."/>
            <person name="Takami S."/>
            <person name="Terashima Y."/>
            <person name="Suzuki O."/>
            <person name="Nakagawa S."/>
            <person name="Senoh A."/>
            <person name="Mizoguchi H."/>
            <person name="Goto Y."/>
            <person name="Shimizu F."/>
            <person name="Wakebe H."/>
            <person name="Hishigaki H."/>
            <person name="Watanabe T."/>
            <person name="Sugiyama A."/>
            <person name="Takemoto M."/>
            <person name="Kawakami B."/>
            <person name="Yamazaki M."/>
            <person name="Watanabe K."/>
            <person name="Kumagai A."/>
            <person name="Itakura S."/>
            <person name="Fukuzumi Y."/>
            <person name="Fujimori Y."/>
            <person name="Komiyama M."/>
            <person name="Tashiro H."/>
            <person name="Tanigami A."/>
            <person name="Fujiwara T."/>
            <person name="Ono T."/>
            <person name="Yamada K."/>
            <person name="Fujii Y."/>
            <person name="Ozaki K."/>
            <person name="Hirao M."/>
            <person name="Ohmori Y."/>
            <person name="Kawabata A."/>
            <person name="Hikiji T."/>
            <person name="Kobatake N."/>
            <person name="Inagaki H."/>
            <person name="Ikema Y."/>
            <person name="Okamoto S."/>
            <person name="Okitani R."/>
            <person name="Kawakami T."/>
            <person name="Noguchi S."/>
            <person name="Itoh T."/>
            <person name="Shigeta K."/>
            <person name="Senba T."/>
            <person name="Matsumura K."/>
            <person name="Nakajima Y."/>
            <person name="Mizuno T."/>
            <person name="Morinaga M."/>
            <person name="Sasaki M."/>
            <person name="Togashi T."/>
            <person name="Oyama M."/>
            <person name="Hata H."/>
            <person name="Watanabe M."/>
            <person name="Komatsu T."/>
            <person name="Mizushima-Sugano J."/>
            <person name="Satoh T."/>
            <person name="Shirai Y."/>
            <person name="Takahashi Y."/>
            <person name="Nakagawa K."/>
            <person name="Okumura K."/>
            <person name="Nagase T."/>
            <person name="Nomura N."/>
            <person name="Kikuchi H."/>
            <person name="Masuho Y."/>
            <person name="Yamashita R."/>
            <person name="Nakai K."/>
            <person name="Yada T."/>
            <person name="Nakamura Y."/>
            <person name="Ohara O."/>
            <person name="Isogai T."/>
            <person name="Sugano S."/>
        </authorList>
    </citation>
    <scope>NUCLEOTIDE SEQUENCE [LARGE SCALE MRNA] OF 312-871</scope>
    <source>
        <tissue>Teratocarcinoma</tissue>
    </source>
</reference>
<reference key="5">
    <citation type="journal article" date="2009" name="J. Proteome Res.">
        <title>Glycoproteomics analysis of human liver tissue by combination of multiple enzyme digestion and hydrazide chemistry.</title>
        <authorList>
            <person name="Chen R."/>
            <person name="Jiang X."/>
            <person name="Sun D."/>
            <person name="Han G."/>
            <person name="Wang F."/>
            <person name="Ye M."/>
            <person name="Wang L."/>
            <person name="Zou H."/>
        </authorList>
    </citation>
    <scope>GLYCOSYLATION [LARGE SCALE ANALYSIS] AT ASN-197</scope>
    <source>
        <tissue>Liver</tissue>
    </source>
</reference>
<keyword id="KW-0053">Apoptosis</keyword>
<keyword id="KW-0106">Calcium</keyword>
<keyword id="KW-0256">Endoplasmic reticulum</keyword>
<keyword id="KW-0325">Glycoprotein</keyword>
<keyword id="KW-0333">Golgi apparatus</keyword>
<keyword id="KW-0378">Hydrolase</keyword>
<keyword id="KW-0479">Metal-binding</keyword>
<keyword id="KW-1267">Proteomics identification</keyword>
<keyword id="KW-1185">Reference proteome</keyword>
<keyword id="KW-0964">Secreted</keyword>
<keyword id="KW-0732">Signal</keyword>
<organism>
    <name type="scientific">Homo sapiens</name>
    <name type="common">Human</name>
    <dbReference type="NCBI Taxonomy" id="9606"/>
    <lineage>
        <taxon>Eukaryota</taxon>
        <taxon>Metazoa</taxon>
        <taxon>Chordata</taxon>
        <taxon>Craniata</taxon>
        <taxon>Vertebrata</taxon>
        <taxon>Euteleostomi</taxon>
        <taxon>Mammalia</taxon>
        <taxon>Eutheria</taxon>
        <taxon>Euarchontoglires</taxon>
        <taxon>Primates</taxon>
        <taxon>Haplorrhini</taxon>
        <taxon>Catarrhini</taxon>
        <taxon>Hominidae</taxon>
        <taxon>Homo</taxon>
    </lineage>
</organism>
<sequence length="871" mass="101027">MKYSCCALVLAVLGTELLGSLCSTVRSPRFRGRIQQERKNIRPNIILVLTDDQDVELGSLQVMNKTRKIMEHGGATFINAFVTTPMCCPSRSSMLTGKYVHNHNVYTNNENCSSPSWQAMHEPRTFAVYLNNTGYRTAFFGKYLNEYNGSYIPPGWREWLGLIKNSRFYNYTVCRNGIKEKHGFDYAKDYFTDLITNESINYFKMSKRMYPHRPVMMVISHAAPHGPEDSAPQFSKLYPNASQHITPSYNYAPNMDKHWIMQYTGPMLPIHMEFTNILQRKRLQTLMSVDDSVERLYNMLVETGELENTYIIYTADHGYHIGQFGLVKGKSMPYDFDIRVPFFIRGPSVEPGSIVPQIVLNIDLAPTILDIAGLDTPPDVDGKSVLKLLDPEKPGNRFRTNKKAKIWRDTFLVERGKFLRKKEESSKNIQQSNHLPKYERVKELCQQARYQTACEQPGQKWQCIEDTSGKLRIHKCKGPSDLLTVRQSTRNLYARGFHDKDKECSCRESGYRASRSQRKSQRQFLRNQGTPKYKPRFVHTRQTRSLSVEFEGEIYDINLEEEEELQVLQPRNIAKRHDEGHKGPRDLQASSGGNRGRMLADSSNAVGPPTTVRVTHKCFILPNDSIHCERELYQSARAWKDHKAYIDKEIEALQDKIKNLREVRGHLKRRKPEECSCSKQSYYNKEKGVKKQEKLKSHLHPFKEAAQEVDSKLQLFKENNRRRKKERKEKRRQRKGEECSLPGLTCFTHDNNHWQTAPFWNLGSFCACTSSNNNTYWCLRTVNETHNFLFCEFATGFLEYFDMNTDPYQLTNTVHTVERGILNQLHVQLMELRSCQGYKQCNPRPKNLDVGNKDGGSYDLHRGQLWDGWEG</sequence>
<dbReference type="EC" id="3.1.6.1" evidence="6"/>
<dbReference type="EC" id="3.1.6.14" evidence="6 7"/>
<dbReference type="EMBL" id="AY101175">
    <property type="protein sequence ID" value="AAM76860.1"/>
    <property type="molecule type" value="mRNA"/>
</dbReference>
<dbReference type="EMBL" id="AF545571">
    <property type="protein sequence ID" value="AAO33315.1"/>
    <property type="molecule type" value="mRNA"/>
</dbReference>
<dbReference type="EMBL" id="AB029000">
    <property type="protein sequence ID" value="BAA83029.1"/>
    <property type="molecule type" value="mRNA"/>
</dbReference>
<dbReference type="EMBL" id="AK074873">
    <property type="protein sequence ID" value="BAC11258.1"/>
    <property type="molecule type" value="mRNA"/>
</dbReference>
<dbReference type="CCDS" id="CCDS6204.1"/>
<dbReference type="RefSeq" id="NP_001121676.1">
    <property type="nucleotide sequence ID" value="NM_001128204.2"/>
</dbReference>
<dbReference type="RefSeq" id="NP_001121677.1">
    <property type="nucleotide sequence ID" value="NM_001128205.2"/>
</dbReference>
<dbReference type="RefSeq" id="NP_001121678.1">
    <property type="nucleotide sequence ID" value="NM_001128206.2"/>
</dbReference>
<dbReference type="RefSeq" id="NP_001399764.1">
    <property type="nucleotide sequence ID" value="NM_001412835.1"/>
</dbReference>
<dbReference type="RefSeq" id="NP_055985.2">
    <property type="nucleotide sequence ID" value="NM_015170.3"/>
</dbReference>
<dbReference type="SMR" id="Q8IWU6"/>
<dbReference type="BioGRID" id="116820">
    <property type="interactions" value="33"/>
</dbReference>
<dbReference type="FunCoup" id="Q8IWU6">
    <property type="interactions" value="655"/>
</dbReference>
<dbReference type="IntAct" id="Q8IWU6">
    <property type="interactions" value="28"/>
</dbReference>
<dbReference type="STRING" id="9606.ENSP00000260128"/>
<dbReference type="GlyConnect" id="1231">
    <property type="glycosylation" value="12 N-Linked glycans (6 sites)"/>
</dbReference>
<dbReference type="GlyCosmos" id="Q8IWU6">
    <property type="glycosylation" value="10 sites, 10 glycans"/>
</dbReference>
<dbReference type="GlyGen" id="Q8IWU6">
    <property type="glycosylation" value="10 sites, 44 N-linked glycans (7 sites)"/>
</dbReference>
<dbReference type="iPTMnet" id="Q8IWU6"/>
<dbReference type="PhosphoSitePlus" id="Q8IWU6"/>
<dbReference type="BioMuta" id="SULF1"/>
<dbReference type="DMDM" id="33112447"/>
<dbReference type="MassIVE" id="Q8IWU6"/>
<dbReference type="PaxDb" id="9606-ENSP00000260128"/>
<dbReference type="PeptideAtlas" id="Q8IWU6"/>
<dbReference type="ProteomicsDB" id="70899"/>
<dbReference type="Antibodypedia" id="25041">
    <property type="antibodies" value="120 antibodies from 24 providers"/>
</dbReference>
<dbReference type="DNASU" id="23213"/>
<dbReference type="Ensembl" id="ENST00000260128.8">
    <property type="protein sequence ID" value="ENSP00000260128.4"/>
    <property type="gene ID" value="ENSG00000137573.14"/>
</dbReference>
<dbReference type="Ensembl" id="ENST00000402687.9">
    <property type="protein sequence ID" value="ENSP00000385704.4"/>
    <property type="gene ID" value="ENSG00000137573.14"/>
</dbReference>
<dbReference type="Ensembl" id="ENST00000419716.7">
    <property type="protein sequence ID" value="ENSP00000390315.3"/>
    <property type="gene ID" value="ENSG00000137573.14"/>
</dbReference>
<dbReference type="Ensembl" id="ENST00000458141.6">
    <property type="protein sequence ID" value="ENSP00000403040.2"/>
    <property type="gene ID" value="ENSG00000137573.14"/>
</dbReference>
<dbReference type="GeneID" id="23213"/>
<dbReference type="KEGG" id="hsa:23213"/>
<dbReference type="MANE-Select" id="ENST00000402687.9">
    <property type="protein sequence ID" value="ENSP00000385704.4"/>
    <property type="RefSeq nucleotide sequence ID" value="NM_001128205.2"/>
    <property type="RefSeq protein sequence ID" value="NP_001121677.1"/>
</dbReference>
<dbReference type="UCSC" id="uc003xyd.3">
    <property type="organism name" value="human"/>
</dbReference>
<dbReference type="AGR" id="HGNC:20391"/>
<dbReference type="CTD" id="23213"/>
<dbReference type="DisGeNET" id="23213"/>
<dbReference type="GeneCards" id="SULF1"/>
<dbReference type="HGNC" id="HGNC:20391">
    <property type="gene designation" value="SULF1"/>
</dbReference>
<dbReference type="HPA" id="ENSG00000137573">
    <property type="expression patterns" value="Low tissue specificity"/>
</dbReference>
<dbReference type="MalaCards" id="SULF1"/>
<dbReference type="MIM" id="610012">
    <property type="type" value="gene"/>
</dbReference>
<dbReference type="neXtProt" id="NX_Q8IWU6"/>
<dbReference type="OpenTargets" id="ENSG00000137573"/>
<dbReference type="PharmGKB" id="PA134861022"/>
<dbReference type="VEuPathDB" id="HostDB:ENSG00000137573"/>
<dbReference type="eggNOG" id="KOG3731">
    <property type="taxonomic scope" value="Eukaryota"/>
</dbReference>
<dbReference type="GeneTree" id="ENSGT00940000157544"/>
<dbReference type="HOGENOM" id="CLU_006332_2_0_1"/>
<dbReference type="InParanoid" id="Q8IWU6"/>
<dbReference type="OMA" id="GFDYAKX"/>
<dbReference type="OrthoDB" id="96314at2759"/>
<dbReference type="PAN-GO" id="Q8IWU6">
    <property type="GO annotations" value="10 GO annotations based on evolutionary models"/>
</dbReference>
<dbReference type="PhylomeDB" id="Q8IWU6"/>
<dbReference type="TreeFam" id="TF313545"/>
<dbReference type="PathwayCommons" id="Q8IWU6"/>
<dbReference type="SignaLink" id="Q8IWU6"/>
<dbReference type="BioGRID-ORCS" id="23213">
    <property type="hits" value="9 hits in 1152 CRISPR screens"/>
</dbReference>
<dbReference type="ChiTaRS" id="SULF1">
    <property type="organism name" value="human"/>
</dbReference>
<dbReference type="GeneWiki" id="SULF1"/>
<dbReference type="GenomeRNAi" id="23213"/>
<dbReference type="Pharos" id="Q8IWU6">
    <property type="development level" value="Tbio"/>
</dbReference>
<dbReference type="PRO" id="PR:Q8IWU6"/>
<dbReference type="Proteomes" id="UP000005640">
    <property type="component" value="Chromosome 8"/>
</dbReference>
<dbReference type="RNAct" id="Q8IWU6">
    <property type="molecule type" value="protein"/>
</dbReference>
<dbReference type="Bgee" id="ENSG00000137573">
    <property type="expression patterns" value="Expressed in parietal pleura and 189 other cell types or tissues"/>
</dbReference>
<dbReference type="ExpressionAtlas" id="Q8IWU6">
    <property type="expression patterns" value="baseline and differential"/>
</dbReference>
<dbReference type="GO" id="GO:0009986">
    <property type="term" value="C:cell surface"/>
    <property type="evidence" value="ECO:0000314"/>
    <property type="project" value="UniProtKB"/>
</dbReference>
<dbReference type="GO" id="GO:0005783">
    <property type="term" value="C:endoplasmic reticulum"/>
    <property type="evidence" value="ECO:0000314"/>
    <property type="project" value="UniProtKB"/>
</dbReference>
<dbReference type="GO" id="GO:0005615">
    <property type="term" value="C:extracellular space"/>
    <property type="evidence" value="ECO:0000314"/>
    <property type="project" value="UniProtKB"/>
</dbReference>
<dbReference type="GO" id="GO:0005795">
    <property type="term" value="C:Golgi stack"/>
    <property type="evidence" value="ECO:0007669"/>
    <property type="project" value="UniProtKB-SubCell"/>
</dbReference>
<dbReference type="GO" id="GO:0045121">
    <property type="term" value="C:membrane raft"/>
    <property type="evidence" value="ECO:0000314"/>
    <property type="project" value="UniProtKB"/>
</dbReference>
<dbReference type="GO" id="GO:0005886">
    <property type="term" value="C:plasma membrane"/>
    <property type="evidence" value="ECO:0000250"/>
    <property type="project" value="UniProtKB"/>
</dbReference>
<dbReference type="GO" id="GO:0004065">
    <property type="term" value="F:arylsulfatase activity"/>
    <property type="evidence" value="ECO:0000314"/>
    <property type="project" value="UniProtKB"/>
</dbReference>
<dbReference type="GO" id="GO:0005509">
    <property type="term" value="F:calcium ion binding"/>
    <property type="evidence" value="ECO:0007669"/>
    <property type="project" value="InterPro"/>
</dbReference>
<dbReference type="GO" id="GO:0005539">
    <property type="term" value="F:glycosaminoglycan binding"/>
    <property type="evidence" value="ECO:0000318"/>
    <property type="project" value="GO_Central"/>
</dbReference>
<dbReference type="GO" id="GO:0008449">
    <property type="term" value="F:N-acetylglucosamine-6-sulfatase activity"/>
    <property type="evidence" value="ECO:0000314"/>
    <property type="project" value="UniProtKB"/>
</dbReference>
<dbReference type="GO" id="GO:0006915">
    <property type="term" value="P:apoptotic process"/>
    <property type="evidence" value="ECO:0007669"/>
    <property type="project" value="UniProtKB-KW"/>
</dbReference>
<dbReference type="GO" id="GO:0060348">
    <property type="term" value="P:bone development"/>
    <property type="evidence" value="ECO:0000250"/>
    <property type="project" value="BHF-UCL"/>
</dbReference>
<dbReference type="GO" id="GO:0051216">
    <property type="term" value="P:cartilage development"/>
    <property type="evidence" value="ECO:0000250"/>
    <property type="project" value="UniProtKB"/>
</dbReference>
<dbReference type="GO" id="GO:0002063">
    <property type="term" value="P:chondrocyte development"/>
    <property type="evidence" value="ECO:0000250"/>
    <property type="project" value="UniProtKB"/>
</dbReference>
<dbReference type="GO" id="GO:0048706">
    <property type="term" value="P:embryonic skeletal system development"/>
    <property type="evidence" value="ECO:0000250"/>
    <property type="project" value="UniProtKB"/>
</dbReference>
<dbReference type="GO" id="GO:0014846">
    <property type="term" value="P:esophagus smooth muscle contraction"/>
    <property type="evidence" value="ECO:0000250"/>
    <property type="project" value="UniProtKB"/>
</dbReference>
<dbReference type="GO" id="GO:0035860">
    <property type="term" value="P:glial cell-derived neurotrophic factor receptor signaling pathway"/>
    <property type="evidence" value="ECO:0000250"/>
    <property type="project" value="UniProtKB"/>
</dbReference>
<dbReference type="GO" id="GO:0032836">
    <property type="term" value="P:glomerular basement membrane development"/>
    <property type="evidence" value="ECO:0000250"/>
    <property type="project" value="UniProtKB"/>
</dbReference>
<dbReference type="GO" id="GO:0003094">
    <property type="term" value="P:glomerular filtration"/>
    <property type="evidence" value="ECO:0000250"/>
    <property type="project" value="UniProtKB"/>
</dbReference>
<dbReference type="GO" id="GO:0030201">
    <property type="term" value="P:heparan sulfate proteoglycan metabolic process"/>
    <property type="evidence" value="ECO:0000314"/>
    <property type="project" value="UniProtKB"/>
</dbReference>
<dbReference type="GO" id="GO:0060384">
    <property type="term" value="P:innervation"/>
    <property type="evidence" value="ECO:0000250"/>
    <property type="project" value="UniProtKB"/>
</dbReference>
<dbReference type="GO" id="GO:0001822">
    <property type="term" value="P:kidney development"/>
    <property type="evidence" value="ECO:0000250"/>
    <property type="project" value="BHF-UCL"/>
</dbReference>
<dbReference type="GO" id="GO:0016525">
    <property type="term" value="P:negative regulation of angiogenesis"/>
    <property type="evidence" value="ECO:0000314"/>
    <property type="project" value="UniProtKB"/>
</dbReference>
<dbReference type="GO" id="GO:0030336">
    <property type="term" value="P:negative regulation of cell migration"/>
    <property type="evidence" value="ECO:0000315"/>
    <property type="project" value="UniProtKB"/>
</dbReference>
<dbReference type="GO" id="GO:0001937">
    <property type="term" value="P:negative regulation of endothelial cell proliferation"/>
    <property type="evidence" value="ECO:0000314"/>
    <property type="project" value="UniProtKB"/>
</dbReference>
<dbReference type="GO" id="GO:0040037">
    <property type="term" value="P:negative regulation of fibroblast growth factor receptor signaling pathway"/>
    <property type="evidence" value="ECO:0000315"/>
    <property type="project" value="UniProtKB"/>
</dbReference>
<dbReference type="GO" id="GO:0060686">
    <property type="term" value="P:negative regulation of prostatic bud formation"/>
    <property type="evidence" value="ECO:0000250"/>
    <property type="project" value="UniProtKB"/>
</dbReference>
<dbReference type="GO" id="GO:0030513">
    <property type="term" value="P:positive regulation of BMP signaling pathway"/>
    <property type="evidence" value="ECO:0000315"/>
    <property type="project" value="UniProtKB"/>
</dbReference>
<dbReference type="GO" id="GO:0010575">
    <property type="term" value="P:positive regulation of vascular endothelial growth factor production"/>
    <property type="evidence" value="ECO:0000250"/>
    <property type="project" value="UniProtKB"/>
</dbReference>
<dbReference type="GO" id="GO:0030177">
    <property type="term" value="P:positive regulation of Wnt signaling pathway"/>
    <property type="evidence" value="ECO:0000314"/>
    <property type="project" value="UniProtKB"/>
</dbReference>
<dbReference type="GO" id="GO:0040036">
    <property type="term" value="P:regulation of fibroblast growth factor receptor signaling pathway"/>
    <property type="evidence" value="ECO:0000315"/>
    <property type="project" value="UniProtKB"/>
</dbReference>
<dbReference type="GO" id="GO:0048010">
    <property type="term" value="P:vascular endothelial growth factor receptor signaling pathway"/>
    <property type="evidence" value="ECO:0000314"/>
    <property type="project" value="UniProtKB"/>
</dbReference>
<dbReference type="CDD" id="cd16147">
    <property type="entry name" value="G6S"/>
    <property type="match status" value="1"/>
</dbReference>
<dbReference type="FunFam" id="3.40.720.10:FF:000003">
    <property type="entry name" value="Extracellular sulfatase"/>
    <property type="match status" value="1"/>
</dbReference>
<dbReference type="Gene3D" id="3.40.720.10">
    <property type="entry name" value="Alkaline Phosphatase, subunit A"/>
    <property type="match status" value="1"/>
</dbReference>
<dbReference type="InterPro" id="IPR017850">
    <property type="entry name" value="Alkaline_phosphatase_core_sf"/>
</dbReference>
<dbReference type="InterPro" id="IPR014615">
    <property type="entry name" value="Extracellular_sulfatase"/>
</dbReference>
<dbReference type="InterPro" id="IPR024609">
    <property type="entry name" value="Extracellular_sulfatase_C"/>
</dbReference>
<dbReference type="InterPro" id="IPR024607">
    <property type="entry name" value="Sulfatase_CS"/>
</dbReference>
<dbReference type="InterPro" id="IPR000917">
    <property type="entry name" value="Sulfatase_N"/>
</dbReference>
<dbReference type="PANTHER" id="PTHR43108:SF1">
    <property type="entry name" value="EXTRACELLULAR SULFATASE SULF-1"/>
    <property type="match status" value="1"/>
</dbReference>
<dbReference type="PANTHER" id="PTHR43108">
    <property type="entry name" value="N-ACETYLGLUCOSAMINE-6-SULFATASE FAMILY MEMBER"/>
    <property type="match status" value="1"/>
</dbReference>
<dbReference type="Pfam" id="PF12548">
    <property type="entry name" value="DUF3740"/>
    <property type="match status" value="2"/>
</dbReference>
<dbReference type="Pfam" id="PF00884">
    <property type="entry name" value="Sulfatase"/>
    <property type="match status" value="1"/>
</dbReference>
<dbReference type="PIRSF" id="PIRSF036665">
    <property type="entry name" value="Sulf1"/>
    <property type="match status" value="1"/>
</dbReference>
<dbReference type="SUPFAM" id="SSF53649">
    <property type="entry name" value="Alkaline phosphatase-like"/>
    <property type="match status" value="2"/>
</dbReference>
<dbReference type="PROSITE" id="PS00523">
    <property type="entry name" value="SULFATASE_1"/>
    <property type="match status" value="1"/>
</dbReference>